<proteinExistence type="evidence at transcript level"/>
<feature type="chain" id="PRO_0000153150" description="Glutamine synthetase">
    <location>
        <begin position="1"/>
        <end position="354"/>
    </location>
</feature>
<feature type="domain" description="GS beta-grasp" evidence="2">
    <location>
        <begin position="22"/>
        <end position="101"/>
    </location>
</feature>
<feature type="domain" description="GS catalytic" evidence="3">
    <location>
        <begin position="108"/>
        <end position="354"/>
    </location>
</feature>
<dbReference type="EC" id="6.3.1.2"/>
<dbReference type="EMBL" id="AJ428992">
    <property type="protein sequence ID" value="CAD22045.1"/>
    <property type="status" value="ALT_INIT"/>
    <property type="molecule type" value="mRNA"/>
</dbReference>
<dbReference type="SMR" id="Q8X169"/>
<dbReference type="GO" id="GO:0005737">
    <property type="term" value="C:cytoplasm"/>
    <property type="evidence" value="ECO:0007669"/>
    <property type="project" value="UniProtKB-SubCell"/>
</dbReference>
<dbReference type="GO" id="GO:0005524">
    <property type="term" value="F:ATP binding"/>
    <property type="evidence" value="ECO:0007669"/>
    <property type="project" value="UniProtKB-KW"/>
</dbReference>
<dbReference type="GO" id="GO:0004356">
    <property type="term" value="F:glutamine synthetase activity"/>
    <property type="evidence" value="ECO:0007669"/>
    <property type="project" value="UniProtKB-EC"/>
</dbReference>
<dbReference type="GO" id="GO:0006542">
    <property type="term" value="P:glutamine biosynthetic process"/>
    <property type="evidence" value="ECO:0007669"/>
    <property type="project" value="InterPro"/>
</dbReference>
<dbReference type="FunFam" id="3.10.20.70:FF:000004">
    <property type="entry name" value="Glutamine synthetase"/>
    <property type="match status" value="1"/>
</dbReference>
<dbReference type="FunFam" id="3.30.590.10:FF:000004">
    <property type="entry name" value="Glutamine synthetase"/>
    <property type="match status" value="1"/>
</dbReference>
<dbReference type="Gene3D" id="3.10.20.70">
    <property type="entry name" value="Glutamine synthetase, N-terminal domain"/>
    <property type="match status" value="1"/>
</dbReference>
<dbReference type="Gene3D" id="3.30.590.10">
    <property type="entry name" value="Glutamine synthetase/guanido kinase, catalytic domain"/>
    <property type="match status" value="1"/>
</dbReference>
<dbReference type="InterPro" id="IPR008147">
    <property type="entry name" value="Gln_synt_N"/>
</dbReference>
<dbReference type="InterPro" id="IPR036651">
    <property type="entry name" value="Gln_synt_N_sf"/>
</dbReference>
<dbReference type="InterPro" id="IPR014746">
    <property type="entry name" value="Gln_synth/guanido_kin_cat_dom"/>
</dbReference>
<dbReference type="InterPro" id="IPR008146">
    <property type="entry name" value="Gln_synth_cat_dom"/>
</dbReference>
<dbReference type="InterPro" id="IPR027303">
    <property type="entry name" value="Gln_synth_gly_rich_site"/>
</dbReference>
<dbReference type="InterPro" id="IPR027302">
    <property type="entry name" value="Gln_synth_N_conserv_site"/>
</dbReference>
<dbReference type="InterPro" id="IPR050292">
    <property type="entry name" value="Glutamine_Synthetase"/>
</dbReference>
<dbReference type="PANTHER" id="PTHR20852">
    <property type="entry name" value="GLUTAMINE SYNTHETASE"/>
    <property type="match status" value="1"/>
</dbReference>
<dbReference type="PANTHER" id="PTHR20852:SF57">
    <property type="entry name" value="GLUTAMINE SYNTHETASE 2 CYTOPLASMIC"/>
    <property type="match status" value="1"/>
</dbReference>
<dbReference type="Pfam" id="PF00120">
    <property type="entry name" value="Gln-synt_C"/>
    <property type="match status" value="1"/>
</dbReference>
<dbReference type="Pfam" id="PF03951">
    <property type="entry name" value="Gln-synt_N"/>
    <property type="match status" value="1"/>
</dbReference>
<dbReference type="SMART" id="SM01230">
    <property type="entry name" value="Gln-synt_C"/>
    <property type="match status" value="1"/>
</dbReference>
<dbReference type="SUPFAM" id="SSF54368">
    <property type="entry name" value="Glutamine synthetase, N-terminal domain"/>
    <property type="match status" value="1"/>
</dbReference>
<dbReference type="SUPFAM" id="SSF55931">
    <property type="entry name" value="Glutamine synthetase/guanido kinase"/>
    <property type="match status" value="1"/>
</dbReference>
<dbReference type="PROSITE" id="PS00180">
    <property type="entry name" value="GLNA_1"/>
    <property type="match status" value="1"/>
</dbReference>
<dbReference type="PROSITE" id="PS00181">
    <property type="entry name" value="GLNA_ATP"/>
    <property type="match status" value="1"/>
</dbReference>
<dbReference type="PROSITE" id="PS51986">
    <property type="entry name" value="GS_BETA_GRASP"/>
    <property type="match status" value="1"/>
</dbReference>
<dbReference type="PROSITE" id="PS51987">
    <property type="entry name" value="GS_CATALYTIC"/>
    <property type="match status" value="1"/>
</dbReference>
<reference key="1">
    <citation type="submission" date="2002-01" db="EMBL/GenBank/DDBJ databases">
        <title>Glutamine synthetase in Amanita muscaria.</title>
        <authorList>
            <person name="Nehls U."/>
            <person name="Kleber R."/>
            <person name="Hampp R."/>
        </authorList>
    </citation>
    <scope>NUCLEOTIDE SEQUENCE [MRNA]</scope>
</reference>
<keyword id="KW-0067">ATP-binding</keyword>
<keyword id="KW-0963">Cytoplasm</keyword>
<keyword id="KW-0436">Ligase</keyword>
<keyword id="KW-0547">Nucleotide-binding</keyword>
<protein>
    <recommendedName>
        <fullName>Glutamine synthetase</fullName>
        <shortName>GS</shortName>
        <ecNumber>6.3.1.2</ecNumber>
    </recommendedName>
    <alternativeName>
        <fullName>Glutamate--ammonia ligase</fullName>
    </alternativeName>
</protein>
<gene>
    <name type="primary">GLN1</name>
</gene>
<sequence length="354" mass="39337">MANQYHNDLLAPYLALDQGGKFHAEYVWIDGDGGLRSKTTTVDQKVTDISQLRVWDFDGSSTNQAPSGNSDVYLRPSAIFKDPFRGGENILVLSETYNNDGTPNRTNHRHHTAKVMELAKDEIPWFGIEQEYTLFDADGSPYGWPKGGFPGPQGPYYCGAGTGKVFARDLIEAHYRACLYAGVNISGINAEVMPSQWEFQVGPCEGISMGDHLWMARYLLIRVAEQWGVKVSFHPKPLQGDWNGAGAHTNYSTLAMREPGGMKYIEAAIEKLAKRHDEHIAVYGEDNEMRLTGRHETGHIGTFSSGVANRGASIRVPRHVANKGYGYLEDRRPASNIDPYRVTGIIIETTILDK</sequence>
<organism>
    <name type="scientific">Amanita muscaria</name>
    <name type="common">Fly agaric</name>
    <name type="synonym">Agaricus muscarius</name>
    <dbReference type="NCBI Taxonomy" id="41956"/>
    <lineage>
        <taxon>Eukaryota</taxon>
        <taxon>Fungi</taxon>
        <taxon>Dikarya</taxon>
        <taxon>Basidiomycota</taxon>
        <taxon>Agaricomycotina</taxon>
        <taxon>Agaricomycetes</taxon>
        <taxon>Agaricomycetidae</taxon>
        <taxon>Agaricales</taxon>
        <taxon>Pluteineae</taxon>
        <taxon>Amanitaceae</taxon>
        <taxon>Amanita</taxon>
    </lineage>
</organism>
<evidence type="ECO:0000250" key="1"/>
<evidence type="ECO:0000255" key="2">
    <source>
        <dbReference type="PROSITE-ProRule" id="PRU01330"/>
    </source>
</evidence>
<evidence type="ECO:0000255" key="3">
    <source>
        <dbReference type="PROSITE-ProRule" id="PRU01331"/>
    </source>
</evidence>
<evidence type="ECO:0000305" key="4"/>
<name>GLNA_AMAMU</name>
<accession>Q8X169</accession>
<comment type="catalytic activity">
    <reaction>
        <text>L-glutamate + NH4(+) + ATP = L-glutamine + ADP + phosphate + H(+)</text>
        <dbReference type="Rhea" id="RHEA:16169"/>
        <dbReference type="ChEBI" id="CHEBI:15378"/>
        <dbReference type="ChEBI" id="CHEBI:28938"/>
        <dbReference type="ChEBI" id="CHEBI:29985"/>
        <dbReference type="ChEBI" id="CHEBI:30616"/>
        <dbReference type="ChEBI" id="CHEBI:43474"/>
        <dbReference type="ChEBI" id="CHEBI:58359"/>
        <dbReference type="ChEBI" id="CHEBI:456216"/>
        <dbReference type="EC" id="6.3.1.2"/>
    </reaction>
</comment>
<comment type="subunit">
    <text evidence="1">Homooctamer.</text>
</comment>
<comment type="subcellular location">
    <subcellularLocation>
        <location evidence="1">Cytoplasm</location>
    </subcellularLocation>
</comment>
<comment type="similarity">
    <text evidence="4">Belongs to the glutamine synthetase family.</text>
</comment>
<comment type="sequence caution" evidence="4">
    <conflict type="erroneous initiation">
        <sequence resource="EMBL-CDS" id="CAD22045"/>
    </conflict>
</comment>